<accession>P06846</accession>
<accession>Q2M9D1</accession>
<organism>
    <name type="scientific">Escherichia coli (strain K12)</name>
    <dbReference type="NCBI Taxonomy" id="83333"/>
    <lineage>
        <taxon>Bacteria</taxon>
        <taxon>Pseudomonadati</taxon>
        <taxon>Pseudomonadota</taxon>
        <taxon>Gammaproteobacteria</taxon>
        <taxon>Enterobacterales</taxon>
        <taxon>Enterobacteriaceae</taxon>
        <taxon>Escherichia</taxon>
    </lineage>
</organism>
<keyword id="KW-0238">DNA-binding</keyword>
<keyword id="KW-1185">Reference proteome</keyword>
<keyword id="KW-0678">Repressor</keyword>
<keyword id="KW-0804">Transcription</keyword>
<keyword id="KW-0805">Transcription regulation</keyword>
<sequence>MATLKDIAIEAGVSLATVSRVLNDDPTLNVKEETKHRILEIAEKLEYKTSSARKLQTGAVNQHHILAIYSYQQELEINDPYYLAIRHGIETQCEKLGIELTNCYEHSGLPDIKNVTGILIVGKPTPALRAAASALTDNICFIDFHEPGSGYDAVDIDLARISKEIIDFYINQGVNRIGFIGGEDEPGKADIREVAFAEYGRLKQVVREEDIWRGGFSSSSGYELAKQMLAREDYPKALFVASDSIAIGVLRAIHERGLNIPQDISLISVNDIPTARFTFPPLSTVRIHSEMMGSQGVNLVYEKARDGRALPLLVFVPSKLKLRGTTR</sequence>
<comment type="function">
    <text>Repressor for beta galactosidase alpha and beta subunits (ebgA and ebgC). Binds lactose as an inducer.</text>
</comment>
<feature type="chain" id="PRO_0000107943" description="HTH-type transcriptional regulator EbgR">
    <location>
        <begin position="1"/>
        <end position="327"/>
    </location>
</feature>
<feature type="domain" description="HTH lacI-type" evidence="1">
    <location>
        <begin position="1"/>
        <end position="57"/>
    </location>
</feature>
<feature type="DNA-binding region" description="H-T-H motif" evidence="1">
    <location>
        <begin position="4"/>
        <end position="23"/>
    </location>
</feature>
<feature type="sequence variant" description="Broaden the specificity of inducer recognition.">
    <original>D</original>
    <variation>E</variation>
    <location>
        <position position="190"/>
    </location>
</feature>
<feature type="sequence variant" description="Broaden the specificity of inducer recognition.">
    <original>A</original>
    <variation>T</variation>
    <location>
        <position position="195"/>
    </location>
</feature>
<feature type="sequence variant" description="Broaden the specificity of inducer recognition.">
    <original>F</original>
    <variation>C</variation>
    <location>
        <position position="196"/>
    </location>
</feature>
<evidence type="ECO:0000255" key="1">
    <source>
        <dbReference type="PROSITE-ProRule" id="PRU00111"/>
    </source>
</evidence>
<gene>
    <name type="primary">ebgR</name>
    <name type="ordered locus">b3075</name>
    <name type="ordered locus">JW3046</name>
</gene>
<name>EBGR_ECOLI</name>
<protein>
    <recommendedName>
        <fullName>HTH-type transcriptional regulator EbgR</fullName>
    </recommendedName>
    <alternativeName>
        <fullName>Ebg operon repressor</fullName>
    </alternativeName>
</protein>
<dbReference type="EMBL" id="M64441">
    <property type="protein sequence ID" value="AAA61970.1"/>
    <property type="molecule type" value="Genomic_DNA"/>
</dbReference>
<dbReference type="EMBL" id="X52031">
    <property type="protein sequence ID" value="CAA36273.1"/>
    <property type="molecule type" value="Genomic_DNA"/>
</dbReference>
<dbReference type="EMBL" id="U18997">
    <property type="protein sequence ID" value="AAA57876.1"/>
    <property type="molecule type" value="Genomic_DNA"/>
</dbReference>
<dbReference type="EMBL" id="U00096">
    <property type="protein sequence ID" value="AAC76110.1"/>
    <property type="molecule type" value="Genomic_DNA"/>
</dbReference>
<dbReference type="EMBL" id="AP009048">
    <property type="protein sequence ID" value="BAE77125.1"/>
    <property type="molecule type" value="Genomic_DNA"/>
</dbReference>
<dbReference type="PIR" id="A25752">
    <property type="entry name" value="RPECEG"/>
</dbReference>
<dbReference type="RefSeq" id="NP_417546.1">
    <property type="nucleotide sequence ID" value="NC_000913.3"/>
</dbReference>
<dbReference type="RefSeq" id="WP_000212475.1">
    <property type="nucleotide sequence ID" value="NZ_LN832404.1"/>
</dbReference>
<dbReference type="SMR" id="P06846"/>
<dbReference type="BioGRID" id="4260843">
    <property type="interactions" value="134"/>
</dbReference>
<dbReference type="DIP" id="DIP-9488N"/>
<dbReference type="FunCoup" id="P06846">
    <property type="interactions" value="23"/>
</dbReference>
<dbReference type="IntAct" id="P06846">
    <property type="interactions" value="1"/>
</dbReference>
<dbReference type="STRING" id="511145.b3075"/>
<dbReference type="jPOST" id="P06846"/>
<dbReference type="PaxDb" id="511145-b3075"/>
<dbReference type="EnsemblBacteria" id="AAC76110">
    <property type="protein sequence ID" value="AAC76110"/>
    <property type="gene ID" value="b3075"/>
</dbReference>
<dbReference type="GeneID" id="947586"/>
<dbReference type="KEGG" id="ecj:JW3046"/>
<dbReference type="KEGG" id="eco:b3075"/>
<dbReference type="KEGG" id="ecoc:C3026_16795"/>
<dbReference type="PATRIC" id="fig|1411691.4.peg.3655"/>
<dbReference type="EchoBASE" id="EB0250"/>
<dbReference type="eggNOG" id="COG1609">
    <property type="taxonomic scope" value="Bacteria"/>
</dbReference>
<dbReference type="HOGENOM" id="CLU_037628_1_2_6"/>
<dbReference type="InParanoid" id="P06846"/>
<dbReference type="OMA" id="HHTFIST"/>
<dbReference type="OrthoDB" id="5681588at2"/>
<dbReference type="PhylomeDB" id="P06846"/>
<dbReference type="BioCyc" id="EcoCyc:PD03254"/>
<dbReference type="PRO" id="PR:P06846"/>
<dbReference type="Proteomes" id="UP000000625">
    <property type="component" value="Chromosome"/>
</dbReference>
<dbReference type="GO" id="GO:0003700">
    <property type="term" value="F:DNA-binding transcription factor activity"/>
    <property type="evidence" value="ECO:0000318"/>
    <property type="project" value="GO_Central"/>
</dbReference>
<dbReference type="GO" id="GO:0000976">
    <property type="term" value="F:transcription cis-regulatory region binding"/>
    <property type="evidence" value="ECO:0000318"/>
    <property type="project" value="GO_Central"/>
</dbReference>
<dbReference type="GO" id="GO:0045892">
    <property type="term" value="P:negative regulation of DNA-templated transcription"/>
    <property type="evidence" value="ECO:0000315"/>
    <property type="project" value="EcoCyc"/>
</dbReference>
<dbReference type="GO" id="GO:0006355">
    <property type="term" value="P:regulation of DNA-templated transcription"/>
    <property type="evidence" value="ECO:0000318"/>
    <property type="project" value="GO_Central"/>
</dbReference>
<dbReference type="CDD" id="cd01392">
    <property type="entry name" value="HTH_LacI"/>
    <property type="match status" value="1"/>
</dbReference>
<dbReference type="CDD" id="cd01544">
    <property type="entry name" value="PBP1_GalR"/>
    <property type="match status" value="1"/>
</dbReference>
<dbReference type="FunFam" id="3.40.50.2300:FF:000160">
    <property type="entry name" value="DNA-binding transcriptional repressor EbgR"/>
    <property type="match status" value="1"/>
</dbReference>
<dbReference type="Gene3D" id="3.40.50.2300">
    <property type="match status" value="2"/>
</dbReference>
<dbReference type="Gene3D" id="1.10.260.40">
    <property type="entry name" value="lambda repressor-like DNA-binding domains"/>
    <property type="match status" value="1"/>
</dbReference>
<dbReference type="InterPro" id="IPR000843">
    <property type="entry name" value="HTH_LacI"/>
</dbReference>
<dbReference type="InterPro" id="IPR046335">
    <property type="entry name" value="LacI/GalR-like_sensor"/>
</dbReference>
<dbReference type="InterPro" id="IPR010982">
    <property type="entry name" value="Lambda_DNA-bd_dom_sf"/>
</dbReference>
<dbReference type="InterPro" id="IPR028082">
    <property type="entry name" value="Peripla_BP_I"/>
</dbReference>
<dbReference type="NCBIfam" id="NF007665">
    <property type="entry name" value="PRK10339.1"/>
    <property type="match status" value="1"/>
</dbReference>
<dbReference type="PANTHER" id="PTHR30146:SF149">
    <property type="entry name" value="HTH-TYPE TRANSCRIPTIONAL REGULATOR EBGR"/>
    <property type="match status" value="1"/>
</dbReference>
<dbReference type="PANTHER" id="PTHR30146">
    <property type="entry name" value="LACI-RELATED TRANSCRIPTIONAL REPRESSOR"/>
    <property type="match status" value="1"/>
</dbReference>
<dbReference type="Pfam" id="PF00356">
    <property type="entry name" value="LacI"/>
    <property type="match status" value="1"/>
</dbReference>
<dbReference type="Pfam" id="PF13377">
    <property type="entry name" value="Peripla_BP_3"/>
    <property type="match status" value="1"/>
</dbReference>
<dbReference type="PRINTS" id="PR00036">
    <property type="entry name" value="HTHLACI"/>
</dbReference>
<dbReference type="SMART" id="SM00354">
    <property type="entry name" value="HTH_LACI"/>
    <property type="match status" value="1"/>
</dbReference>
<dbReference type="SUPFAM" id="SSF47413">
    <property type="entry name" value="lambda repressor-like DNA-binding domains"/>
    <property type="match status" value="1"/>
</dbReference>
<dbReference type="SUPFAM" id="SSF53822">
    <property type="entry name" value="Periplasmic binding protein-like I"/>
    <property type="match status" value="1"/>
</dbReference>
<dbReference type="PROSITE" id="PS00356">
    <property type="entry name" value="HTH_LACI_1"/>
    <property type="match status" value="1"/>
</dbReference>
<dbReference type="PROSITE" id="PS50932">
    <property type="entry name" value="HTH_LACI_2"/>
    <property type="match status" value="1"/>
</dbReference>
<proteinExistence type="predicted"/>
<reference key="1">
    <citation type="journal article" date="1989" name="Genetics">
        <title>DNA sequence analysis of artificially evolved ebg enzyme and ebg repressor genes.</title>
        <authorList>
            <person name="Hall B.G."/>
            <person name="Betts P.W."/>
            <person name="Wootton J.C."/>
        </authorList>
    </citation>
    <scope>NUCLEOTIDE SEQUENCE [GENOMIC DNA]</scope>
</reference>
<reference key="2">
    <citation type="journal article" date="1985" name="Mol. Biol. Evol.">
        <title>Sequence of the ebgR gene of Escherichia coli: evidence that the EBG and LAC operons are descended from a common ancestor.</title>
        <authorList>
            <person name="Stokes H.W."/>
            <person name="Hall B.G."/>
        </authorList>
    </citation>
    <scope>NUCLEOTIDE SEQUENCE [GENOMIC DNA]</scope>
</reference>
<reference key="3">
    <citation type="journal article" date="1997" name="Science">
        <title>The complete genome sequence of Escherichia coli K-12.</title>
        <authorList>
            <person name="Blattner F.R."/>
            <person name="Plunkett G. III"/>
            <person name="Bloch C.A."/>
            <person name="Perna N.T."/>
            <person name="Burland V."/>
            <person name="Riley M."/>
            <person name="Collado-Vides J."/>
            <person name="Glasner J.D."/>
            <person name="Rode C.K."/>
            <person name="Mayhew G.F."/>
            <person name="Gregor J."/>
            <person name="Davis N.W."/>
            <person name="Kirkpatrick H.A."/>
            <person name="Goeden M.A."/>
            <person name="Rose D.J."/>
            <person name="Mau B."/>
            <person name="Shao Y."/>
        </authorList>
    </citation>
    <scope>NUCLEOTIDE SEQUENCE [LARGE SCALE GENOMIC DNA]</scope>
    <source>
        <strain>K12 / MG1655 / ATCC 47076</strain>
    </source>
</reference>
<reference key="4">
    <citation type="journal article" date="2006" name="Mol. Syst. Biol.">
        <title>Highly accurate genome sequences of Escherichia coli K-12 strains MG1655 and W3110.</title>
        <authorList>
            <person name="Hayashi K."/>
            <person name="Morooka N."/>
            <person name="Yamamoto Y."/>
            <person name="Fujita K."/>
            <person name="Isono K."/>
            <person name="Choi S."/>
            <person name="Ohtsubo E."/>
            <person name="Baba T."/>
            <person name="Wanner B.L."/>
            <person name="Mori H."/>
            <person name="Horiuchi T."/>
        </authorList>
    </citation>
    <scope>NUCLEOTIDE SEQUENCE [LARGE SCALE GENOMIC DNA]</scope>
    <source>
        <strain>K12 / W3110 / ATCC 27325 / DSM 5911</strain>
    </source>
</reference>